<accession>P36580</accession>
<accession>Q9UUD3</accession>
<proteinExistence type="evidence at protein level"/>
<evidence type="ECO:0000250" key="1"/>
<evidence type="ECO:0000269" key="2">
    <source>
    </source>
</evidence>
<evidence type="ECO:0000305" key="3"/>
<organism>
    <name type="scientific">Schizosaccharomyces pombe (strain 972 / ATCC 24843)</name>
    <name type="common">Fission yeast</name>
    <dbReference type="NCBI Taxonomy" id="284812"/>
    <lineage>
        <taxon>Eukaryota</taxon>
        <taxon>Fungi</taxon>
        <taxon>Dikarya</taxon>
        <taxon>Ascomycota</taxon>
        <taxon>Taphrinomycotina</taxon>
        <taxon>Schizosaccharomycetes</taxon>
        <taxon>Schizosaccharomycetales</taxon>
        <taxon>Schizosaccharomycetaceae</taxon>
        <taxon>Schizosaccharomyces</taxon>
    </lineage>
</organism>
<dbReference type="EC" id="4.1.2.13"/>
<dbReference type="EMBL" id="D17415">
    <property type="protein sequence ID" value="BAA04237.1"/>
    <property type="molecule type" value="Genomic_DNA"/>
</dbReference>
<dbReference type="EMBL" id="CU329671">
    <property type="protein sequence ID" value="CAB52034.1"/>
    <property type="molecule type" value="Genomic_DNA"/>
</dbReference>
<dbReference type="PIR" id="T39798">
    <property type="entry name" value="T39798"/>
</dbReference>
<dbReference type="PIR" id="T43289">
    <property type="entry name" value="T43289"/>
</dbReference>
<dbReference type="RefSeq" id="NP_595692.1">
    <property type="nucleotide sequence ID" value="NM_001021589.2"/>
</dbReference>
<dbReference type="SMR" id="P36580"/>
<dbReference type="BioGRID" id="277287">
    <property type="interactions" value="11"/>
</dbReference>
<dbReference type="FunCoup" id="P36580">
    <property type="interactions" value="429"/>
</dbReference>
<dbReference type="IntAct" id="P36580">
    <property type="interactions" value="3"/>
</dbReference>
<dbReference type="MINT" id="P36580"/>
<dbReference type="STRING" id="284812.P36580"/>
<dbReference type="iPTMnet" id="P36580"/>
<dbReference type="PaxDb" id="4896-SPBC19C2.07.1"/>
<dbReference type="EnsemblFungi" id="SPBC19C2.07.1">
    <property type="protein sequence ID" value="SPBC19C2.07.1:pep"/>
    <property type="gene ID" value="SPBC19C2.07"/>
</dbReference>
<dbReference type="GeneID" id="2540767"/>
<dbReference type="KEGG" id="spo:2540767"/>
<dbReference type="PomBase" id="SPBC19C2.07">
    <property type="gene designation" value="fba1"/>
</dbReference>
<dbReference type="VEuPathDB" id="FungiDB:SPBC19C2.07"/>
<dbReference type="eggNOG" id="KOG4153">
    <property type="taxonomic scope" value="Eukaryota"/>
</dbReference>
<dbReference type="HOGENOM" id="CLU_036923_1_0_1"/>
<dbReference type="InParanoid" id="P36580"/>
<dbReference type="OMA" id="PRTWGKL"/>
<dbReference type="PhylomeDB" id="P36580"/>
<dbReference type="UniPathway" id="UPA00109">
    <property type="reaction ID" value="UER00183"/>
</dbReference>
<dbReference type="PRO" id="PR:P36580"/>
<dbReference type="Proteomes" id="UP000002485">
    <property type="component" value="Chromosome II"/>
</dbReference>
<dbReference type="GO" id="GO:0005829">
    <property type="term" value="C:cytosol"/>
    <property type="evidence" value="ECO:0007005"/>
    <property type="project" value="PomBase"/>
</dbReference>
<dbReference type="GO" id="GO:0005634">
    <property type="term" value="C:nucleus"/>
    <property type="evidence" value="ECO:0007005"/>
    <property type="project" value="PomBase"/>
</dbReference>
<dbReference type="GO" id="GO:0004332">
    <property type="term" value="F:fructose-bisphosphate aldolase activity"/>
    <property type="evidence" value="ECO:0000318"/>
    <property type="project" value="GO_Central"/>
</dbReference>
<dbReference type="GO" id="GO:0008270">
    <property type="term" value="F:zinc ion binding"/>
    <property type="evidence" value="ECO:0000318"/>
    <property type="project" value="GO_Central"/>
</dbReference>
<dbReference type="GO" id="GO:0061621">
    <property type="term" value="P:canonical glycolysis"/>
    <property type="evidence" value="ECO:0000250"/>
    <property type="project" value="PomBase"/>
</dbReference>
<dbReference type="GO" id="GO:0006094">
    <property type="term" value="P:gluconeogenesis"/>
    <property type="evidence" value="ECO:0000318"/>
    <property type="project" value="GO_Central"/>
</dbReference>
<dbReference type="GO" id="GO:0006096">
    <property type="term" value="P:glycolytic process"/>
    <property type="evidence" value="ECO:0000318"/>
    <property type="project" value="GO_Central"/>
</dbReference>
<dbReference type="CDD" id="cd00946">
    <property type="entry name" value="FBP_aldolase_IIA"/>
    <property type="match status" value="1"/>
</dbReference>
<dbReference type="FunFam" id="3.20.20.70:FF:000013">
    <property type="entry name" value="Class II fructose-bisphosphate aldolase"/>
    <property type="match status" value="1"/>
</dbReference>
<dbReference type="Gene3D" id="3.20.20.70">
    <property type="entry name" value="Aldolase class I"/>
    <property type="match status" value="1"/>
</dbReference>
<dbReference type="InterPro" id="IPR013785">
    <property type="entry name" value="Aldolase_TIM"/>
</dbReference>
<dbReference type="InterPro" id="IPR000771">
    <property type="entry name" value="FBA_II"/>
</dbReference>
<dbReference type="InterPro" id="IPR006411">
    <property type="entry name" value="Fruct_bisP_bact"/>
</dbReference>
<dbReference type="NCBIfam" id="TIGR00167">
    <property type="entry name" value="cbbA"/>
    <property type="match status" value="1"/>
</dbReference>
<dbReference type="NCBIfam" id="TIGR01520">
    <property type="entry name" value="FruBisAldo_II_A"/>
    <property type="match status" value="1"/>
</dbReference>
<dbReference type="NCBIfam" id="NF006628">
    <property type="entry name" value="PRK09197.1"/>
    <property type="match status" value="1"/>
</dbReference>
<dbReference type="PANTHER" id="PTHR30559:SF0">
    <property type="entry name" value="FRUCTOSE-BISPHOSPHATE ALDOLASE"/>
    <property type="match status" value="1"/>
</dbReference>
<dbReference type="PANTHER" id="PTHR30559">
    <property type="entry name" value="FRUCTOSE-BISPHOSPHATE ALDOLASE CLASS 2"/>
    <property type="match status" value="1"/>
</dbReference>
<dbReference type="Pfam" id="PF01116">
    <property type="entry name" value="F_bP_aldolase"/>
    <property type="match status" value="1"/>
</dbReference>
<dbReference type="PIRSF" id="PIRSF001359">
    <property type="entry name" value="F_bP_aldolase_II"/>
    <property type="match status" value="1"/>
</dbReference>
<dbReference type="SUPFAM" id="SSF51569">
    <property type="entry name" value="Aldolase"/>
    <property type="match status" value="1"/>
</dbReference>
<dbReference type="PROSITE" id="PS00602">
    <property type="entry name" value="ALDOLASE_CLASS_II_1"/>
    <property type="match status" value="1"/>
</dbReference>
<dbReference type="PROSITE" id="PS00806">
    <property type="entry name" value="ALDOLASE_CLASS_II_2"/>
    <property type="match status" value="1"/>
</dbReference>
<feature type="chain" id="PRO_0000178761" description="Fructose-bisphosphate aldolase">
    <location>
        <begin position="1"/>
        <end position="358"/>
    </location>
</feature>
<feature type="active site" description="Proton donor" evidence="1">
    <location>
        <position position="108"/>
    </location>
</feature>
<feature type="binding site" evidence="1">
    <location>
        <position position="61"/>
    </location>
    <ligand>
        <name>D-glyceraldehyde 3-phosphate</name>
        <dbReference type="ChEBI" id="CHEBI:59776"/>
    </ligand>
</feature>
<feature type="binding site" evidence="1">
    <location>
        <position position="109"/>
    </location>
    <ligand>
        <name>Zn(2+)</name>
        <dbReference type="ChEBI" id="CHEBI:29105"/>
        <label>1</label>
        <note>catalytic</note>
    </ligand>
</feature>
<feature type="binding site" evidence="1">
    <location>
        <position position="143"/>
    </location>
    <ligand>
        <name>Zn(2+)</name>
        <dbReference type="ChEBI" id="CHEBI:29105"/>
        <label>2</label>
    </ligand>
</feature>
<feature type="binding site" evidence="1">
    <location>
        <position position="173"/>
    </location>
    <ligand>
        <name>Zn(2+)</name>
        <dbReference type="ChEBI" id="CHEBI:29105"/>
        <label>2</label>
    </ligand>
</feature>
<feature type="binding site" evidence="1">
    <location>
        <position position="225"/>
    </location>
    <ligand>
        <name>Zn(2+)</name>
        <dbReference type="ChEBI" id="CHEBI:29105"/>
        <label>1</label>
        <note>catalytic</note>
    </ligand>
</feature>
<feature type="binding site" evidence="1">
    <location>
        <position position="226"/>
    </location>
    <ligand>
        <name>dihydroxyacetone phosphate</name>
        <dbReference type="ChEBI" id="CHEBI:57642"/>
    </ligand>
</feature>
<feature type="binding site" evidence="1">
    <location>
        <position position="264"/>
    </location>
    <ligand>
        <name>Zn(2+)</name>
        <dbReference type="ChEBI" id="CHEBI:29105"/>
        <label>1</label>
        <note>catalytic</note>
    </ligand>
</feature>
<feature type="binding site" evidence="1">
    <location>
        <begin position="265"/>
        <end position="267"/>
    </location>
    <ligand>
        <name>dihydroxyacetone phosphate</name>
        <dbReference type="ChEBI" id="CHEBI:57642"/>
    </ligand>
</feature>
<feature type="binding site" evidence="1">
    <location>
        <begin position="286"/>
        <end position="289"/>
    </location>
    <ligand>
        <name>dihydroxyacetone phosphate</name>
        <dbReference type="ChEBI" id="CHEBI:57642"/>
    </ligand>
</feature>
<feature type="modified residue" description="Phosphothreonine" evidence="2">
    <location>
        <position position="289"/>
    </location>
</feature>
<feature type="modified residue" description="Phosphothreonine" evidence="2">
    <location>
        <position position="312"/>
    </location>
</feature>
<feature type="modified residue" description="Phosphothreonine" evidence="2">
    <location>
        <position position="340"/>
    </location>
</feature>
<feature type="modified residue" description="Phosphothreonine" evidence="2">
    <location>
        <position position="342"/>
    </location>
</feature>
<feature type="sequence conflict" description="In Ref. 1; BAA04237." evidence="3" ref="1">
    <original>T</original>
    <variation>A</variation>
    <location>
        <position position="13"/>
    </location>
</feature>
<gene>
    <name type="primary">fba1</name>
    <name type="ORF">SPBC19C2.07</name>
</gene>
<name>ALF_SCHPO</name>
<sequence length="358" mass="39570">MGILDIVPTGVITGDNVLKLFTYAREHGFAIPAINVTSSSTAIAALEAAREARSPIILQTSNGGAHFFAGKESSNEGQKASIAGSIAAAHYIRSIAPFFGVPVVMHSDHCAKKLLPWMDGMFEADEAYFKIHGEPLFSSHMLDLSEEPKKENIAQVKEYCKRAVPMKIWIEMEIGITGGEEDGVDNSHVSHTELYTQPEDIWDVYRELSSVTPYFSIAAAFGNVHGVYKPGNVKLQPALLGQHQAYVKEQLKTTNDKPVFFVFHGGSGSSVNEFRTGIKCGVVKVNIDTDTQFAYVEGVRDYVLKYKDYLMTPVGNPEGADKPNKKKFDPRVWIHEGEKTMTKRVLTALEDFYTVNTL</sequence>
<comment type="function">
    <text evidence="1">Catalyzes the aldol condensation of dihydroxyacetone phosphate (DHAP or glycerone-phosphate) with glyceraldehyde 3-phosphate (G3P) to form fructose 1,6-bisphosphate (FBP) in gluconeogenesis and the reverse reaction in glycolysis.</text>
</comment>
<comment type="catalytic activity">
    <reaction>
        <text>beta-D-fructose 1,6-bisphosphate = D-glyceraldehyde 3-phosphate + dihydroxyacetone phosphate</text>
        <dbReference type="Rhea" id="RHEA:14729"/>
        <dbReference type="ChEBI" id="CHEBI:32966"/>
        <dbReference type="ChEBI" id="CHEBI:57642"/>
        <dbReference type="ChEBI" id="CHEBI:59776"/>
        <dbReference type="EC" id="4.1.2.13"/>
    </reaction>
</comment>
<comment type="cofactor">
    <cofactor evidence="1">
        <name>Zn(2+)</name>
        <dbReference type="ChEBI" id="CHEBI:29105"/>
    </cofactor>
    <text evidence="1">Binds 2 Zn(2+) ions per subunit. One is catalytic and the other provides a structural contribution.</text>
</comment>
<comment type="pathway">
    <text>Carbohydrate degradation; glycolysis; D-glyceraldehyde 3-phosphate and glycerone phosphate from D-glucose: step 4/4.</text>
</comment>
<comment type="subunit">
    <text evidence="1">Homodimer.</text>
</comment>
<comment type="similarity">
    <text evidence="3">Belongs to the class II fructose-bisphosphate aldolase family.</text>
</comment>
<keyword id="KW-0324">Glycolysis</keyword>
<keyword id="KW-0456">Lyase</keyword>
<keyword id="KW-0479">Metal-binding</keyword>
<keyword id="KW-0597">Phosphoprotein</keyword>
<keyword id="KW-1185">Reference proteome</keyword>
<keyword id="KW-0862">Zinc</keyword>
<protein>
    <recommendedName>
        <fullName>Fructose-bisphosphate aldolase</fullName>
        <shortName>FBP aldolase</shortName>
        <shortName>FBPA</shortName>
        <ecNumber>4.1.2.13</ecNumber>
    </recommendedName>
    <alternativeName>
        <fullName>Fructose-1,6-bisphosphate aldolase</fullName>
    </alternativeName>
</protein>
<reference key="1">
    <citation type="journal article" date="1994" name="Biochim. Biophys. Acta">
        <title>Molecular cloning and nucleotide sequencing of Schizosaccharomyces pombe homologue of the class II fructose-1,6-bisphosphate aldolase gene.</title>
        <authorList>
            <person name="Mutoh N."/>
            <person name="Hayashi Y."/>
        </authorList>
    </citation>
    <scope>NUCLEOTIDE SEQUENCE [GENOMIC DNA]</scope>
</reference>
<reference key="2">
    <citation type="journal article" date="2002" name="Nature">
        <title>The genome sequence of Schizosaccharomyces pombe.</title>
        <authorList>
            <person name="Wood V."/>
            <person name="Gwilliam R."/>
            <person name="Rajandream M.A."/>
            <person name="Lyne M.H."/>
            <person name="Lyne R."/>
            <person name="Stewart A."/>
            <person name="Sgouros J.G."/>
            <person name="Peat N."/>
            <person name="Hayles J."/>
            <person name="Baker S.G."/>
            <person name="Basham D."/>
            <person name="Bowman S."/>
            <person name="Brooks K."/>
            <person name="Brown D."/>
            <person name="Brown S."/>
            <person name="Chillingworth T."/>
            <person name="Churcher C.M."/>
            <person name="Collins M."/>
            <person name="Connor R."/>
            <person name="Cronin A."/>
            <person name="Davis P."/>
            <person name="Feltwell T."/>
            <person name="Fraser A."/>
            <person name="Gentles S."/>
            <person name="Goble A."/>
            <person name="Hamlin N."/>
            <person name="Harris D.E."/>
            <person name="Hidalgo J."/>
            <person name="Hodgson G."/>
            <person name="Holroyd S."/>
            <person name="Hornsby T."/>
            <person name="Howarth S."/>
            <person name="Huckle E.J."/>
            <person name="Hunt S."/>
            <person name="Jagels K."/>
            <person name="James K.D."/>
            <person name="Jones L."/>
            <person name="Jones M."/>
            <person name="Leather S."/>
            <person name="McDonald S."/>
            <person name="McLean J."/>
            <person name="Mooney P."/>
            <person name="Moule S."/>
            <person name="Mungall K.L."/>
            <person name="Murphy L.D."/>
            <person name="Niblett D."/>
            <person name="Odell C."/>
            <person name="Oliver K."/>
            <person name="O'Neil S."/>
            <person name="Pearson D."/>
            <person name="Quail M.A."/>
            <person name="Rabbinowitsch E."/>
            <person name="Rutherford K.M."/>
            <person name="Rutter S."/>
            <person name="Saunders D."/>
            <person name="Seeger K."/>
            <person name="Sharp S."/>
            <person name="Skelton J."/>
            <person name="Simmonds M.N."/>
            <person name="Squares R."/>
            <person name="Squares S."/>
            <person name="Stevens K."/>
            <person name="Taylor K."/>
            <person name="Taylor R.G."/>
            <person name="Tivey A."/>
            <person name="Walsh S.V."/>
            <person name="Warren T."/>
            <person name="Whitehead S."/>
            <person name="Woodward J.R."/>
            <person name="Volckaert G."/>
            <person name="Aert R."/>
            <person name="Robben J."/>
            <person name="Grymonprez B."/>
            <person name="Weltjens I."/>
            <person name="Vanstreels E."/>
            <person name="Rieger M."/>
            <person name="Schaefer M."/>
            <person name="Mueller-Auer S."/>
            <person name="Gabel C."/>
            <person name="Fuchs M."/>
            <person name="Duesterhoeft A."/>
            <person name="Fritzc C."/>
            <person name="Holzer E."/>
            <person name="Moestl D."/>
            <person name="Hilbert H."/>
            <person name="Borzym K."/>
            <person name="Langer I."/>
            <person name="Beck A."/>
            <person name="Lehrach H."/>
            <person name="Reinhardt R."/>
            <person name="Pohl T.M."/>
            <person name="Eger P."/>
            <person name="Zimmermann W."/>
            <person name="Wedler H."/>
            <person name="Wambutt R."/>
            <person name="Purnelle B."/>
            <person name="Goffeau A."/>
            <person name="Cadieu E."/>
            <person name="Dreano S."/>
            <person name="Gloux S."/>
            <person name="Lelaure V."/>
            <person name="Mottier S."/>
            <person name="Galibert F."/>
            <person name="Aves S.J."/>
            <person name="Xiang Z."/>
            <person name="Hunt C."/>
            <person name="Moore K."/>
            <person name="Hurst S.M."/>
            <person name="Lucas M."/>
            <person name="Rochet M."/>
            <person name="Gaillardin C."/>
            <person name="Tallada V.A."/>
            <person name="Garzon A."/>
            <person name="Thode G."/>
            <person name="Daga R.R."/>
            <person name="Cruzado L."/>
            <person name="Jimenez J."/>
            <person name="Sanchez M."/>
            <person name="del Rey F."/>
            <person name="Benito J."/>
            <person name="Dominguez A."/>
            <person name="Revuelta J.L."/>
            <person name="Moreno S."/>
            <person name="Armstrong J."/>
            <person name="Forsburg S.L."/>
            <person name="Cerutti L."/>
            <person name="Lowe T."/>
            <person name="McCombie W.R."/>
            <person name="Paulsen I."/>
            <person name="Potashkin J."/>
            <person name="Shpakovski G.V."/>
            <person name="Ussery D."/>
            <person name="Barrell B.G."/>
            <person name="Nurse P."/>
        </authorList>
    </citation>
    <scope>NUCLEOTIDE SEQUENCE [LARGE SCALE GENOMIC DNA]</scope>
    <source>
        <strain>972 / ATCC 24843</strain>
    </source>
</reference>
<reference key="3">
    <citation type="journal article" date="2008" name="J. Proteome Res.">
        <title>Phosphoproteome analysis of fission yeast.</title>
        <authorList>
            <person name="Wilson-Grady J.T."/>
            <person name="Villen J."/>
            <person name="Gygi S.P."/>
        </authorList>
    </citation>
    <scope>PHOSPHORYLATION [LARGE SCALE ANALYSIS] AT THR-289; THR-312; THR-340 AND THR-342</scope>
    <scope>IDENTIFICATION BY MASS SPECTROMETRY</scope>
</reference>